<dbReference type="EMBL" id="U17053">
    <property type="protein sequence ID" value="AAB60629.1"/>
    <property type="molecule type" value="Genomic_DNA"/>
</dbReference>
<dbReference type="EMBL" id="U17052">
    <property type="protein sequence ID" value="AAB60629.1"/>
    <property type="status" value="JOINED"/>
    <property type="molecule type" value="Genomic_DNA"/>
</dbReference>
<dbReference type="EMBL" id="U35038">
    <property type="protein sequence ID" value="AAC99991.1"/>
    <property type="molecule type" value="mRNA"/>
</dbReference>
<dbReference type="RefSeq" id="NP_001009783.1">
    <property type="nucleotide sequence ID" value="NM_001009783.1"/>
</dbReference>
<dbReference type="SMR" id="Q28586"/>
<dbReference type="STRING" id="9940.ENSOARP00000016128"/>
<dbReference type="GlyCosmos" id="Q28586">
    <property type="glycosylation" value="2 sites, No reported glycans"/>
</dbReference>
<dbReference type="PaxDb" id="9940-ENSOARP00000016128"/>
<dbReference type="GeneID" id="443350"/>
<dbReference type="KEGG" id="oas:443350"/>
<dbReference type="CTD" id="3567"/>
<dbReference type="eggNOG" id="ENOG502RWD8">
    <property type="taxonomic scope" value="Eukaryota"/>
</dbReference>
<dbReference type="OMA" id="VPTHKNH"/>
<dbReference type="OrthoDB" id="9446172at2759"/>
<dbReference type="Proteomes" id="UP000002356">
    <property type="component" value="Unplaced"/>
</dbReference>
<dbReference type="GO" id="GO:0005615">
    <property type="term" value="C:extracellular space"/>
    <property type="evidence" value="ECO:0007669"/>
    <property type="project" value="UniProtKB-KW"/>
</dbReference>
<dbReference type="GO" id="GO:0005125">
    <property type="term" value="F:cytokine activity"/>
    <property type="evidence" value="ECO:0007669"/>
    <property type="project" value="UniProtKB-KW"/>
</dbReference>
<dbReference type="GO" id="GO:0008083">
    <property type="term" value="F:growth factor activity"/>
    <property type="evidence" value="ECO:0007669"/>
    <property type="project" value="UniProtKB-KW"/>
</dbReference>
<dbReference type="GO" id="GO:0005137">
    <property type="term" value="F:interleukin-5 receptor binding"/>
    <property type="evidence" value="ECO:0007669"/>
    <property type="project" value="InterPro"/>
</dbReference>
<dbReference type="GO" id="GO:0006955">
    <property type="term" value="P:immune response"/>
    <property type="evidence" value="ECO:0007669"/>
    <property type="project" value="InterPro"/>
</dbReference>
<dbReference type="Gene3D" id="1.20.1250.10">
    <property type="match status" value="1"/>
</dbReference>
<dbReference type="InterPro" id="IPR009079">
    <property type="entry name" value="4_helix_cytokine-like_core"/>
</dbReference>
<dbReference type="InterPro" id="IPR000186">
    <property type="entry name" value="IL-5"/>
</dbReference>
<dbReference type="PANTHER" id="PTHR48491">
    <property type="entry name" value="INTERLEUKIN-5"/>
    <property type="match status" value="1"/>
</dbReference>
<dbReference type="PANTHER" id="PTHR48491:SF1">
    <property type="entry name" value="INTERLEUKIN-5"/>
    <property type="match status" value="1"/>
</dbReference>
<dbReference type="Pfam" id="PF02025">
    <property type="entry name" value="IL5"/>
    <property type="match status" value="1"/>
</dbReference>
<dbReference type="PRINTS" id="PR00432">
    <property type="entry name" value="INTERLEUKIN5"/>
</dbReference>
<dbReference type="SUPFAM" id="SSF47266">
    <property type="entry name" value="4-helical cytokines"/>
    <property type="match status" value="1"/>
</dbReference>
<comment type="function">
    <text evidence="2 3">Homodimeric cytokine expressed predominantly by T-lymphocytes and NK cells that plays an important role in the survival, differentiation, and chemotaxis of eosinophils. Also acts on activated and resting B-cells to induce immunoglobulin production, growth, and differentiation (By similarity). Mechanistically, exerts its biological effects through a receptor composed of IL5RA subunit and the cytokine receptor common subunit beta/CSF2RB. Binding to the receptor leads to activation of various kinases including LYN, SYK and JAK2 and thereby propagates signals through the RAS-MAPK and JAK-STAT5 pathways respectively (By similarity).</text>
</comment>
<comment type="subunit">
    <text evidence="2 3">Homodimer; disulfide-linked. Interacts with IL5RA. Interacts with CSF2RB.</text>
</comment>
<comment type="subcellular location">
    <subcellularLocation>
        <location evidence="2">Secreted</location>
    </subcellularLocation>
</comment>
<comment type="similarity">
    <text evidence="5">Belongs to the IL-5 family.</text>
</comment>
<evidence type="ECO:0000250" key="1"/>
<evidence type="ECO:0000250" key="2">
    <source>
        <dbReference type="UniProtKB" id="P04401"/>
    </source>
</evidence>
<evidence type="ECO:0000250" key="3">
    <source>
        <dbReference type="UniProtKB" id="P05113"/>
    </source>
</evidence>
<evidence type="ECO:0000255" key="4"/>
<evidence type="ECO:0000305" key="5"/>
<name>IL5_SHEEP</name>
<feature type="signal peptide" evidence="1">
    <location>
        <begin position="1"/>
        <end position="19"/>
    </location>
</feature>
<feature type="chain" id="PRO_0000015566" description="Interleukin-5">
    <location>
        <begin position="20"/>
        <end position="132"/>
    </location>
</feature>
<feature type="glycosylation site" description="N-linked (GlcNAc...) asparagine" evidence="4">
    <location>
        <position position="74"/>
    </location>
</feature>
<feature type="glycosylation site" description="N-linked (GlcNAc...) asparagine" evidence="4">
    <location>
        <position position="88"/>
    </location>
</feature>
<feature type="disulfide bond" description="Interchain (with C-103)" evidence="1">
    <location>
        <position position="61"/>
    </location>
</feature>
<feature type="disulfide bond" description="Interchain (with C-61)" evidence="1">
    <location>
        <position position="103"/>
    </location>
</feature>
<reference key="1">
    <citation type="submission" date="1995-07" db="EMBL/GenBank/DDBJ databases">
        <title>Structure of the sheep interleukin-5 gene.</title>
        <authorList>
            <person name="Bryson C.E."/>
            <person name="Viney E."/>
            <person name="Brandon M."/>
            <person name="Boyd A.W."/>
        </authorList>
    </citation>
    <scope>NUCLEOTIDE SEQUENCE [GENOMIC DNA]</scope>
</reference>
<reference key="2">
    <citation type="journal article" date="1996" name="DNA Seq.">
        <title>Cloning and sequencing of an ovine interleukin-5 cDNA.</title>
        <authorList>
            <person name="Seow H.-F."/>
            <person name="David M.-J."/>
            <person name="McWaters P.G."/>
            <person name="Hurst L."/>
            <person name="Wood P.R."/>
        </authorList>
    </citation>
    <scope>NUCLEOTIDE SEQUENCE [MRNA]</scope>
</reference>
<proteinExistence type="evidence at transcript level"/>
<protein>
    <recommendedName>
        <fullName>Interleukin-5</fullName>
        <shortName>IL-5</shortName>
    </recommendedName>
    <alternativeName>
        <fullName>Eosinophil differentiation factor</fullName>
    </alternativeName>
    <alternativeName>
        <fullName>T-cell replacing factor</fullName>
        <shortName>TRF</shortName>
    </alternativeName>
</protein>
<gene>
    <name type="primary">IL5</name>
</gene>
<organism>
    <name type="scientific">Ovis aries</name>
    <name type="common">Sheep</name>
    <dbReference type="NCBI Taxonomy" id="9940"/>
    <lineage>
        <taxon>Eukaryota</taxon>
        <taxon>Metazoa</taxon>
        <taxon>Chordata</taxon>
        <taxon>Craniata</taxon>
        <taxon>Vertebrata</taxon>
        <taxon>Euteleostomi</taxon>
        <taxon>Mammalia</taxon>
        <taxon>Eutheria</taxon>
        <taxon>Laurasiatheria</taxon>
        <taxon>Artiodactyla</taxon>
        <taxon>Ruminantia</taxon>
        <taxon>Pecora</taxon>
        <taxon>Bovidae</taxon>
        <taxon>Caprinae</taxon>
        <taxon>Ovis</taxon>
    </lineage>
</organism>
<accession>Q28586</accession>
<keyword id="KW-0202">Cytokine</keyword>
<keyword id="KW-1015">Disulfide bond</keyword>
<keyword id="KW-0325">Glycoprotein</keyword>
<keyword id="KW-0339">Growth factor</keyword>
<keyword id="KW-1185">Reference proteome</keyword>
<keyword id="KW-0964">Secreted</keyword>
<keyword id="KW-0732">Signal</keyword>
<sequence length="132" mass="14974">MHLRLTLVALGAAYVCANAVESTMNRLVAETLTLLSTHQTLLIGDGNLMIPTPQHTNHQLCIEEVFQGIDTLKNQTAQGDAVKKIFRNLSLIKEYIDLQKRKCGGERWRVKQFLDYLQVFLGVINTEWTMES</sequence>